<feature type="chain" id="PRO_1000141470" description="Large ribosomal subunit protein uL1">
    <location>
        <begin position="1"/>
        <end position="229"/>
    </location>
</feature>
<organism>
    <name type="scientific">Streptococcus pyogenes serotype M49 (strain NZ131)</name>
    <dbReference type="NCBI Taxonomy" id="471876"/>
    <lineage>
        <taxon>Bacteria</taxon>
        <taxon>Bacillati</taxon>
        <taxon>Bacillota</taxon>
        <taxon>Bacilli</taxon>
        <taxon>Lactobacillales</taxon>
        <taxon>Streptococcaceae</taxon>
        <taxon>Streptococcus</taxon>
    </lineage>
</organism>
<name>RL1_STRPZ</name>
<sequence>MAKKSKQMRAALEKVDSTKAYSVEEAVALVKETNFAKFDASVEVAYNLNIDVRKADQQIRGAMVLPNGTGKTQRVLVFARGAKAEEAKAAGADFVGEDDLVAKINGGWLDFDVVIATPDMMAIVGRLGRVLGPRNLMPNPKTGTVTMDVAKAVEESKGGKITYRADKAGNVQALIGKVSFDADKLVENFKAFHDVMAKAKPATAKGTYMANVSITSTQGVGIKVDPNSL</sequence>
<keyword id="KW-0678">Repressor</keyword>
<keyword id="KW-0687">Ribonucleoprotein</keyword>
<keyword id="KW-0689">Ribosomal protein</keyword>
<keyword id="KW-0694">RNA-binding</keyword>
<keyword id="KW-0699">rRNA-binding</keyword>
<keyword id="KW-0810">Translation regulation</keyword>
<keyword id="KW-0820">tRNA-binding</keyword>
<gene>
    <name evidence="1" type="primary">rplA</name>
    <name type="ordered locus">Spy49_0388</name>
</gene>
<reference key="1">
    <citation type="journal article" date="2008" name="J. Bacteriol.">
        <title>Genome sequence of a nephritogenic and highly transformable M49 strain of Streptococcus pyogenes.</title>
        <authorList>
            <person name="McShan W.M."/>
            <person name="Ferretti J.J."/>
            <person name="Karasawa T."/>
            <person name="Suvorov A.N."/>
            <person name="Lin S."/>
            <person name="Qin B."/>
            <person name="Jia H."/>
            <person name="Kenton S."/>
            <person name="Najar F."/>
            <person name="Wu H."/>
            <person name="Scott J."/>
            <person name="Roe B.A."/>
            <person name="Savic D.J."/>
        </authorList>
    </citation>
    <scope>NUCLEOTIDE SEQUENCE [LARGE SCALE GENOMIC DNA]</scope>
    <source>
        <strain>NZ131</strain>
    </source>
</reference>
<comment type="function">
    <text evidence="1">Binds directly to 23S rRNA. The L1 stalk is quite mobile in the ribosome, and is involved in E site tRNA release.</text>
</comment>
<comment type="function">
    <text evidence="1">Protein L1 is also a translational repressor protein, it controls the translation of the L11 operon by binding to its mRNA.</text>
</comment>
<comment type="subunit">
    <text evidence="1">Part of the 50S ribosomal subunit.</text>
</comment>
<comment type="similarity">
    <text evidence="1">Belongs to the universal ribosomal protein uL1 family.</text>
</comment>
<accession>B5XK62</accession>
<evidence type="ECO:0000255" key="1">
    <source>
        <dbReference type="HAMAP-Rule" id="MF_01318"/>
    </source>
</evidence>
<evidence type="ECO:0000305" key="2"/>
<protein>
    <recommendedName>
        <fullName evidence="1">Large ribosomal subunit protein uL1</fullName>
    </recommendedName>
    <alternativeName>
        <fullName evidence="2">50S ribosomal protein L1</fullName>
    </alternativeName>
</protein>
<proteinExistence type="inferred from homology"/>
<dbReference type="EMBL" id="CP000829">
    <property type="protein sequence ID" value="ACI60724.1"/>
    <property type="molecule type" value="Genomic_DNA"/>
</dbReference>
<dbReference type="SMR" id="B5XK62"/>
<dbReference type="KEGG" id="soz:Spy49_0388"/>
<dbReference type="HOGENOM" id="CLU_062853_0_0_9"/>
<dbReference type="Proteomes" id="UP000001039">
    <property type="component" value="Chromosome"/>
</dbReference>
<dbReference type="GO" id="GO:0015934">
    <property type="term" value="C:large ribosomal subunit"/>
    <property type="evidence" value="ECO:0007669"/>
    <property type="project" value="InterPro"/>
</dbReference>
<dbReference type="GO" id="GO:0019843">
    <property type="term" value="F:rRNA binding"/>
    <property type="evidence" value="ECO:0007669"/>
    <property type="project" value="UniProtKB-UniRule"/>
</dbReference>
<dbReference type="GO" id="GO:0003735">
    <property type="term" value="F:structural constituent of ribosome"/>
    <property type="evidence" value="ECO:0007669"/>
    <property type="project" value="InterPro"/>
</dbReference>
<dbReference type="GO" id="GO:0000049">
    <property type="term" value="F:tRNA binding"/>
    <property type="evidence" value="ECO:0007669"/>
    <property type="project" value="UniProtKB-KW"/>
</dbReference>
<dbReference type="GO" id="GO:0006417">
    <property type="term" value="P:regulation of translation"/>
    <property type="evidence" value="ECO:0007669"/>
    <property type="project" value="UniProtKB-KW"/>
</dbReference>
<dbReference type="GO" id="GO:0006412">
    <property type="term" value="P:translation"/>
    <property type="evidence" value="ECO:0007669"/>
    <property type="project" value="UniProtKB-UniRule"/>
</dbReference>
<dbReference type="CDD" id="cd00403">
    <property type="entry name" value="Ribosomal_L1"/>
    <property type="match status" value="1"/>
</dbReference>
<dbReference type="FunFam" id="3.40.50.790:FF:000001">
    <property type="entry name" value="50S ribosomal protein L1"/>
    <property type="match status" value="1"/>
</dbReference>
<dbReference type="Gene3D" id="3.30.190.20">
    <property type="match status" value="1"/>
</dbReference>
<dbReference type="Gene3D" id="3.40.50.790">
    <property type="match status" value="1"/>
</dbReference>
<dbReference type="HAMAP" id="MF_01318_B">
    <property type="entry name" value="Ribosomal_uL1_B"/>
    <property type="match status" value="1"/>
</dbReference>
<dbReference type="InterPro" id="IPR005878">
    <property type="entry name" value="Ribosom_uL1_bac-type"/>
</dbReference>
<dbReference type="InterPro" id="IPR002143">
    <property type="entry name" value="Ribosomal_uL1"/>
</dbReference>
<dbReference type="InterPro" id="IPR023674">
    <property type="entry name" value="Ribosomal_uL1-like"/>
</dbReference>
<dbReference type="InterPro" id="IPR028364">
    <property type="entry name" value="Ribosomal_uL1/biogenesis"/>
</dbReference>
<dbReference type="InterPro" id="IPR016095">
    <property type="entry name" value="Ribosomal_uL1_3-a/b-sand"/>
</dbReference>
<dbReference type="InterPro" id="IPR023673">
    <property type="entry name" value="Ribosomal_uL1_CS"/>
</dbReference>
<dbReference type="NCBIfam" id="TIGR01169">
    <property type="entry name" value="rplA_bact"/>
    <property type="match status" value="1"/>
</dbReference>
<dbReference type="PANTHER" id="PTHR36427">
    <property type="entry name" value="54S RIBOSOMAL PROTEIN L1, MITOCHONDRIAL"/>
    <property type="match status" value="1"/>
</dbReference>
<dbReference type="PANTHER" id="PTHR36427:SF3">
    <property type="entry name" value="LARGE RIBOSOMAL SUBUNIT PROTEIN UL1M"/>
    <property type="match status" value="1"/>
</dbReference>
<dbReference type="Pfam" id="PF00687">
    <property type="entry name" value="Ribosomal_L1"/>
    <property type="match status" value="1"/>
</dbReference>
<dbReference type="PIRSF" id="PIRSF002155">
    <property type="entry name" value="Ribosomal_L1"/>
    <property type="match status" value="1"/>
</dbReference>
<dbReference type="SUPFAM" id="SSF56808">
    <property type="entry name" value="Ribosomal protein L1"/>
    <property type="match status" value="1"/>
</dbReference>
<dbReference type="PROSITE" id="PS01199">
    <property type="entry name" value="RIBOSOMAL_L1"/>
    <property type="match status" value="1"/>
</dbReference>